<protein>
    <recommendedName>
        <fullName evidence="1">UPF0102 protein Pnap_0271</fullName>
    </recommendedName>
</protein>
<reference key="1">
    <citation type="journal article" date="2009" name="Environ. Microbiol.">
        <title>The genome of Polaromonas naphthalenivorans strain CJ2, isolated from coal tar-contaminated sediment, reveals physiological and metabolic versatility and evolution through extensive horizontal gene transfer.</title>
        <authorList>
            <person name="Yagi J.M."/>
            <person name="Sims D."/>
            <person name="Brettin T."/>
            <person name="Bruce D."/>
            <person name="Madsen E.L."/>
        </authorList>
    </citation>
    <scope>NUCLEOTIDE SEQUENCE [LARGE SCALE GENOMIC DNA]</scope>
    <source>
        <strain>CJ2</strain>
    </source>
</reference>
<feature type="chain" id="PRO_0000336223" description="UPF0102 protein Pnap_0271">
    <location>
        <begin position="1"/>
        <end position="153"/>
    </location>
</feature>
<organism>
    <name type="scientific">Polaromonas naphthalenivorans (strain CJ2)</name>
    <dbReference type="NCBI Taxonomy" id="365044"/>
    <lineage>
        <taxon>Bacteria</taxon>
        <taxon>Pseudomonadati</taxon>
        <taxon>Pseudomonadota</taxon>
        <taxon>Betaproteobacteria</taxon>
        <taxon>Burkholderiales</taxon>
        <taxon>Comamonadaceae</taxon>
        <taxon>Polaromonas</taxon>
    </lineage>
</organism>
<name>Y271_POLNA</name>
<evidence type="ECO:0000255" key="1">
    <source>
        <dbReference type="HAMAP-Rule" id="MF_00048"/>
    </source>
</evidence>
<keyword id="KW-1185">Reference proteome</keyword>
<sequence>MWFSRKQAVNVAPKSTAGGAAALPKQVTTKSRGDAAESAARAYLVGAGLRWIESNYRTPGRGGGEIDLVMRVPDGTLVFVEVRQRSSASHGGAGASISAVKQRRIIFAARHYLMRFASLPPCRFDVVLVHGALSGGESPQATIEWLPAAFDAS</sequence>
<comment type="similarity">
    <text evidence="1">Belongs to the UPF0102 family.</text>
</comment>
<accession>A1VIW8</accession>
<dbReference type="EMBL" id="CP000529">
    <property type="protein sequence ID" value="ABM35596.1"/>
    <property type="molecule type" value="Genomic_DNA"/>
</dbReference>
<dbReference type="RefSeq" id="WP_011799704.1">
    <property type="nucleotide sequence ID" value="NC_008781.1"/>
</dbReference>
<dbReference type="SMR" id="A1VIW8"/>
<dbReference type="STRING" id="365044.Pnap_0271"/>
<dbReference type="KEGG" id="pna:Pnap_0271"/>
<dbReference type="eggNOG" id="COG0792">
    <property type="taxonomic scope" value="Bacteria"/>
</dbReference>
<dbReference type="HOGENOM" id="CLU_115353_1_0_4"/>
<dbReference type="Proteomes" id="UP000000644">
    <property type="component" value="Chromosome"/>
</dbReference>
<dbReference type="GO" id="GO:0003676">
    <property type="term" value="F:nucleic acid binding"/>
    <property type="evidence" value="ECO:0007669"/>
    <property type="project" value="InterPro"/>
</dbReference>
<dbReference type="CDD" id="cd20736">
    <property type="entry name" value="PoNe_Nuclease"/>
    <property type="match status" value="1"/>
</dbReference>
<dbReference type="Gene3D" id="3.40.1350.10">
    <property type="match status" value="1"/>
</dbReference>
<dbReference type="HAMAP" id="MF_00048">
    <property type="entry name" value="UPF0102"/>
    <property type="match status" value="1"/>
</dbReference>
<dbReference type="InterPro" id="IPR011335">
    <property type="entry name" value="Restrct_endonuc-II-like"/>
</dbReference>
<dbReference type="InterPro" id="IPR011856">
    <property type="entry name" value="tRNA_endonuc-like_dom_sf"/>
</dbReference>
<dbReference type="InterPro" id="IPR003509">
    <property type="entry name" value="UPF0102_YraN-like"/>
</dbReference>
<dbReference type="NCBIfam" id="NF009150">
    <property type="entry name" value="PRK12497.1-3"/>
    <property type="match status" value="1"/>
</dbReference>
<dbReference type="NCBIfam" id="TIGR00252">
    <property type="entry name" value="YraN family protein"/>
    <property type="match status" value="1"/>
</dbReference>
<dbReference type="PANTHER" id="PTHR34039">
    <property type="entry name" value="UPF0102 PROTEIN YRAN"/>
    <property type="match status" value="1"/>
</dbReference>
<dbReference type="PANTHER" id="PTHR34039:SF1">
    <property type="entry name" value="UPF0102 PROTEIN YRAN"/>
    <property type="match status" value="1"/>
</dbReference>
<dbReference type="Pfam" id="PF02021">
    <property type="entry name" value="UPF0102"/>
    <property type="match status" value="1"/>
</dbReference>
<dbReference type="SUPFAM" id="SSF52980">
    <property type="entry name" value="Restriction endonuclease-like"/>
    <property type="match status" value="1"/>
</dbReference>
<proteinExistence type="inferred from homology"/>
<gene>
    <name type="ordered locus">Pnap_0271</name>
</gene>